<keyword id="KW-0067">ATP-binding</keyword>
<keyword id="KW-0436">Ligase</keyword>
<keyword id="KW-0547">Nucleotide-binding</keyword>
<keyword id="KW-0648">Protein biosynthesis</keyword>
<keyword id="KW-1185">Reference proteome</keyword>
<feature type="chain" id="PRO_0000105152" description="Glutamyl-tRNA(Gln) amidotransferase subunit A">
    <location>
        <begin position="1"/>
        <end position="481"/>
    </location>
</feature>
<feature type="active site" description="Charge relay system" evidence="1">
    <location>
        <position position="76"/>
    </location>
</feature>
<feature type="active site" description="Charge relay system" evidence="1">
    <location>
        <position position="151"/>
    </location>
</feature>
<feature type="active site" description="Acyl-ester intermediate" evidence="1">
    <location>
        <position position="175"/>
    </location>
</feature>
<proteinExistence type="inferred from homology"/>
<dbReference type="EC" id="6.3.5.7" evidence="1"/>
<dbReference type="EMBL" id="AE006470">
    <property type="protein sequence ID" value="AAM71514.1"/>
    <property type="molecule type" value="Genomic_DNA"/>
</dbReference>
<dbReference type="RefSeq" id="NP_661172.1">
    <property type="nucleotide sequence ID" value="NC_002932.3"/>
</dbReference>
<dbReference type="RefSeq" id="WP_010931960.1">
    <property type="nucleotide sequence ID" value="NC_002932.3"/>
</dbReference>
<dbReference type="SMR" id="Q8KFQ4"/>
<dbReference type="STRING" id="194439.CT0268"/>
<dbReference type="EnsemblBacteria" id="AAM71514">
    <property type="protein sequence ID" value="AAM71514"/>
    <property type="gene ID" value="CT0268"/>
</dbReference>
<dbReference type="KEGG" id="cte:CT0268"/>
<dbReference type="PATRIC" id="fig|194439.7.peg.260"/>
<dbReference type="eggNOG" id="COG0154">
    <property type="taxonomic scope" value="Bacteria"/>
</dbReference>
<dbReference type="HOGENOM" id="CLU_009600_0_3_10"/>
<dbReference type="OrthoDB" id="9811471at2"/>
<dbReference type="Proteomes" id="UP000001007">
    <property type="component" value="Chromosome"/>
</dbReference>
<dbReference type="GO" id="GO:0030956">
    <property type="term" value="C:glutamyl-tRNA(Gln) amidotransferase complex"/>
    <property type="evidence" value="ECO:0007669"/>
    <property type="project" value="InterPro"/>
</dbReference>
<dbReference type="GO" id="GO:0005524">
    <property type="term" value="F:ATP binding"/>
    <property type="evidence" value="ECO:0007669"/>
    <property type="project" value="UniProtKB-KW"/>
</dbReference>
<dbReference type="GO" id="GO:0050567">
    <property type="term" value="F:glutaminyl-tRNA synthase (glutamine-hydrolyzing) activity"/>
    <property type="evidence" value="ECO:0007669"/>
    <property type="project" value="UniProtKB-UniRule"/>
</dbReference>
<dbReference type="GO" id="GO:0006412">
    <property type="term" value="P:translation"/>
    <property type="evidence" value="ECO:0007669"/>
    <property type="project" value="UniProtKB-UniRule"/>
</dbReference>
<dbReference type="Gene3D" id="3.90.1300.10">
    <property type="entry name" value="Amidase signature (AS) domain"/>
    <property type="match status" value="1"/>
</dbReference>
<dbReference type="HAMAP" id="MF_00120">
    <property type="entry name" value="GatA"/>
    <property type="match status" value="1"/>
</dbReference>
<dbReference type="InterPro" id="IPR000120">
    <property type="entry name" value="Amidase"/>
</dbReference>
<dbReference type="InterPro" id="IPR020556">
    <property type="entry name" value="Amidase_CS"/>
</dbReference>
<dbReference type="InterPro" id="IPR023631">
    <property type="entry name" value="Amidase_dom"/>
</dbReference>
<dbReference type="InterPro" id="IPR036928">
    <property type="entry name" value="AS_sf"/>
</dbReference>
<dbReference type="InterPro" id="IPR004412">
    <property type="entry name" value="GatA"/>
</dbReference>
<dbReference type="NCBIfam" id="TIGR00132">
    <property type="entry name" value="gatA"/>
    <property type="match status" value="1"/>
</dbReference>
<dbReference type="PANTHER" id="PTHR11895:SF151">
    <property type="entry name" value="GLUTAMYL-TRNA(GLN) AMIDOTRANSFERASE SUBUNIT A"/>
    <property type="match status" value="1"/>
</dbReference>
<dbReference type="PANTHER" id="PTHR11895">
    <property type="entry name" value="TRANSAMIDASE"/>
    <property type="match status" value="1"/>
</dbReference>
<dbReference type="Pfam" id="PF01425">
    <property type="entry name" value="Amidase"/>
    <property type="match status" value="1"/>
</dbReference>
<dbReference type="SUPFAM" id="SSF75304">
    <property type="entry name" value="Amidase signature (AS) enzymes"/>
    <property type="match status" value="1"/>
</dbReference>
<dbReference type="PROSITE" id="PS00571">
    <property type="entry name" value="AMIDASES"/>
    <property type="match status" value="1"/>
</dbReference>
<comment type="function">
    <text evidence="1">Allows the formation of correctly charged Gln-tRNA(Gln) through the transamidation of misacylated Glu-tRNA(Gln) in organisms which lack glutaminyl-tRNA synthetase. The reaction takes place in the presence of glutamine and ATP through an activated gamma-phospho-Glu-tRNA(Gln).</text>
</comment>
<comment type="catalytic activity">
    <reaction evidence="1">
        <text>L-glutamyl-tRNA(Gln) + L-glutamine + ATP + H2O = L-glutaminyl-tRNA(Gln) + L-glutamate + ADP + phosphate + H(+)</text>
        <dbReference type="Rhea" id="RHEA:17521"/>
        <dbReference type="Rhea" id="RHEA-COMP:9681"/>
        <dbReference type="Rhea" id="RHEA-COMP:9684"/>
        <dbReference type="ChEBI" id="CHEBI:15377"/>
        <dbReference type="ChEBI" id="CHEBI:15378"/>
        <dbReference type="ChEBI" id="CHEBI:29985"/>
        <dbReference type="ChEBI" id="CHEBI:30616"/>
        <dbReference type="ChEBI" id="CHEBI:43474"/>
        <dbReference type="ChEBI" id="CHEBI:58359"/>
        <dbReference type="ChEBI" id="CHEBI:78520"/>
        <dbReference type="ChEBI" id="CHEBI:78521"/>
        <dbReference type="ChEBI" id="CHEBI:456216"/>
        <dbReference type="EC" id="6.3.5.7"/>
    </reaction>
</comment>
<comment type="subunit">
    <text evidence="1">Heterotrimer of A, B and C subunits.</text>
</comment>
<comment type="similarity">
    <text evidence="1">Belongs to the amidase family. GatA subfamily.</text>
</comment>
<evidence type="ECO:0000255" key="1">
    <source>
        <dbReference type="HAMAP-Rule" id="MF_00120"/>
    </source>
</evidence>
<gene>
    <name evidence="1" type="primary">gatA</name>
    <name type="ordered locus">CT0268</name>
</gene>
<reference key="1">
    <citation type="journal article" date="2002" name="Proc. Natl. Acad. Sci. U.S.A.">
        <title>The complete genome sequence of Chlorobium tepidum TLS, a photosynthetic, anaerobic, green-sulfur bacterium.</title>
        <authorList>
            <person name="Eisen J.A."/>
            <person name="Nelson K.E."/>
            <person name="Paulsen I.T."/>
            <person name="Heidelberg J.F."/>
            <person name="Wu M."/>
            <person name="Dodson R.J."/>
            <person name="DeBoy R.T."/>
            <person name="Gwinn M.L."/>
            <person name="Nelson W.C."/>
            <person name="Haft D.H."/>
            <person name="Hickey E.K."/>
            <person name="Peterson J.D."/>
            <person name="Durkin A.S."/>
            <person name="Kolonay J.F."/>
            <person name="Yang F."/>
            <person name="Holt I.E."/>
            <person name="Umayam L.A."/>
            <person name="Mason T.M."/>
            <person name="Brenner M."/>
            <person name="Shea T.P."/>
            <person name="Parksey D.S."/>
            <person name="Nierman W.C."/>
            <person name="Feldblyum T.V."/>
            <person name="Hansen C.L."/>
            <person name="Craven M.B."/>
            <person name="Radune D."/>
            <person name="Vamathevan J.J."/>
            <person name="Khouri H.M."/>
            <person name="White O."/>
            <person name="Gruber T.M."/>
            <person name="Ketchum K.A."/>
            <person name="Venter J.C."/>
            <person name="Tettelin H."/>
            <person name="Bryant D.A."/>
            <person name="Fraser C.M."/>
        </authorList>
    </citation>
    <scope>NUCLEOTIDE SEQUENCE [LARGE SCALE GENOMIC DNA]</scope>
    <source>
        <strain>ATCC 49652 / DSM 12025 / NBRC 103806 / TLS</strain>
    </source>
</reference>
<organism>
    <name type="scientific">Chlorobaculum tepidum (strain ATCC 49652 / DSM 12025 / NBRC 103806 / TLS)</name>
    <name type="common">Chlorobium tepidum</name>
    <dbReference type="NCBI Taxonomy" id="194439"/>
    <lineage>
        <taxon>Bacteria</taxon>
        <taxon>Pseudomonadati</taxon>
        <taxon>Chlorobiota</taxon>
        <taxon>Chlorobiia</taxon>
        <taxon>Chlorobiales</taxon>
        <taxon>Chlorobiaceae</taxon>
        <taxon>Chlorobaculum</taxon>
    </lineage>
</organism>
<accession>Q8KFQ4</accession>
<sequence length="481" mass="51858">MQFHGYEDLRSRLLSGELTCEQVISDYLQRIDSSRDDNIFTVVFHDEAMARARELDSKLQRGEAPGVLFGMPIAIKDNIAMKGAPLSCASKILAGYESVYDATVIKRMQAEDAIFVGRTNMDEFAMGSSNENSAIGPVPNPYDKTRVPGGSSGGSAAAVANDLAMVALGSDTGGSVRQPAGFCNIIGLKPTYGRISRYGLVAFASSFDQIGLLAANCDDAALVLGVIAGKDEHDATSSHHDVPEYDTAMDHVSVDGLRIGVPRAFFPESLNADVAGVVKAGLKKLEEAGAELVEIDLPESDYAIAAYYILVTAEASSNLARFDGARYGYRSPDSPDLSSMYVNSRTEGFGAEVKRRIMLGTYVLSAGYYDTYYKKAQQVRRVFQDKYREAFEKVDVIFGPTSPFPPFGIGDKMDNPLEMYLADVFTVPASIVGMPAISVPVGFDSLGLPVGAHLICNFFEEGKMLGIARHLQTLCQTAPSN</sequence>
<name>GATA_CHLTE</name>
<protein>
    <recommendedName>
        <fullName evidence="1">Glutamyl-tRNA(Gln) amidotransferase subunit A</fullName>
        <shortName evidence="1">Glu-ADT subunit A</shortName>
        <ecNumber evidence="1">6.3.5.7</ecNumber>
    </recommendedName>
</protein>